<name>CEP83_HUMAN</name>
<dbReference type="EMBL" id="AF155115">
    <property type="protein sequence ID" value="AAD42881.1"/>
    <property type="status" value="ALT_FRAME"/>
    <property type="molecule type" value="mRNA"/>
</dbReference>
<dbReference type="EMBL" id="AC073655">
    <property type="status" value="NOT_ANNOTATED_CDS"/>
    <property type="molecule type" value="Genomic_DNA"/>
</dbReference>
<dbReference type="EMBL" id="BC053614">
    <property type="status" value="NOT_ANNOTATED_CDS"/>
    <property type="molecule type" value="mRNA"/>
</dbReference>
<dbReference type="EMBL" id="BC125086">
    <property type="protein sequence ID" value="AAI25087.1"/>
    <property type="status" value="ALT_INIT"/>
    <property type="molecule type" value="mRNA"/>
</dbReference>
<dbReference type="EMBL" id="BC125087">
    <property type="protein sequence ID" value="AAI25088.1"/>
    <property type="molecule type" value="mRNA"/>
</dbReference>
<dbReference type="EMBL" id="AK056316">
    <property type="status" value="NOT_ANNOTATED_CDS"/>
    <property type="molecule type" value="mRNA"/>
</dbReference>
<dbReference type="CCDS" id="CCDS41820.1">
    <molecule id="Q9Y592-1"/>
</dbReference>
<dbReference type="RefSeq" id="NP_001035858.1">
    <molecule id="Q9Y592-1"/>
    <property type="nucleotide sequence ID" value="NM_001042399.2"/>
</dbReference>
<dbReference type="RefSeq" id="NP_001333386.1">
    <molecule id="Q9Y592-1"/>
    <property type="nucleotide sequence ID" value="NM_001346457.2"/>
</dbReference>
<dbReference type="RefSeq" id="NP_001354966.1">
    <molecule id="Q9Y592-1"/>
    <property type="nucleotide sequence ID" value="NM_001368037.1"/>
</dbReference>
<dbReference type="RefSeq" id="NP_001354967.1">
    <molecule id="Q9Y592-1"/>
    <property type="nucleotide sequence ID" value="NM_001368038.1"/>
</dbReference>
<dbReference type="RefSeq" id="NP_057206.2">
    <molecule id="Q9Y592-1"/>
    <property type="nucleotide sequence ID" value="NM_016122.3"/>
</dbReference>
<dbReference type="RefSeq" id="XP_011536726.1">
    <molecule id="Q9Y592-1"/>
    <property type="nucleotide sequence ID" value="XM_011538424.3"/>
</dbReference>
<dbReference type="RefSeq" id="XP_016874874.1">
    <molecule id="Q9Y592-1"/>
    <property type="nucleotide sequence ID" value="XM_017019385.3"/>
</dbReference>
<dbReference type="RefSeq" id="XP_016874875.1">
    <molecule id="Q9Y592-1"/>
    <property type="nucleotide sequence ID" value="XM_017019386.3"/>
</dbReference>
<dbReference type="RefSeq" id="XP_047284878.1">
    <molecule id="Q9Y592-1"/>
    <property type="nucleotide sequence ID" value="XM_047428922.1"/>
</dbReference>
<dbReference type="RefSeq" id="XP_047284879.1">
    <molecule id="Q9Y592-1"/>
    <property type="nucleotide sequence ID" value="XM_047428923.1"/>
</dbReference>
<dbReference type="RefSeq" id="XP_054228139.1">
    <molecule id="Q9Y592-1"/>
    <property type="nucleotide sequence ID" value="XM_054372164.1"/>
</dbReference>
<dbReference type="RefSeq" id="XP_054228140.1">
    <molecule id="Q9Y592-1"/>
    <property type="nucleotide sequence ID" value="XM_054372165.1"/>
</dbReference>
<dbReference type="RefSeq" id="XP_054228141.1">
    <molecule id="Q9Y592-1"/>
    <property type="nucleotide sequence ID" value="XM_054372166.1"/>
</dbReference>
<dbReference type="RefSeq" id="XP_054228142.1">
    <molecule id="Q9Y592-1"/>
    <property type="nucleotide sequence ID" value="XM_054372167.1"/>
</dbReference>
<dbReference type="SMR" id="Q9Y592"/>
<dbReference type="BioGRID" id="119321">
    <property type="interactions" value="44"/>
</dbReference>
<dbReference type="CORUM" id="Q9Y592"/>
<dbReference type="FunCoup" id="Q9Y592">
    <property type="interactions" value="938"/>
</dbReference>
<dbReference type="IntAct" id="Q9Y592">
    <property type="interactions" value="40"/>
</dbReference>
<dbReference type="MINT" id="Q9Y592"/>
<dbReference type="STRING" id="9606.ENSP00000380911"/>
<dbReference type="GlyGen" id="Q9Y592">
    <property type="glycosylation" value="1 site, 1 O-linked glycan (1 site)"/>
</dbReference>
<dbReference type="iPTMnet" id="Q9Y592"/>
<dbReference type="PhosphoSitePlus" id="Q9Y592"/>
<dbReference type="BioMuta" id="CEP83"/>
<dbReference type="DMDM" id="97045295"/>
<dbReference type="jPOST" id="Q9Y592"/>
<dbReference type="MassIVE" id="Q9Y592"/>
<dbReference type="PaxDb" id="9606-ENSP00000380911"/>
<dbReference type="PeptideAtlas" id="Q9Y592"/>
<dbReference type="ProteomicsDB" id="86318">
    <molecule id="Q9Y592-1"/>
</dbReference>
<dbReference type="ProteomicsDB" id="86319">
    <molecule id="Q9Y592-2"/>
</dbReference>
<dbReference type="Pumba" id="Q9Y592"/>
<dbReference type="Antibodypedia" id="52583">
    <property type="antibodies" value="97 antibodies from 20 providers"/>
</dbReference>
<dbReference type="DNASU" id="51134"/>
<dbReference type="Ensembl" id="ENST00000339839.9">
    <molecule id="Q9Y592-1"/>
    <property type="protein sequence ID" value="ENSP00000344655.5"/>
    <property type="gene ID" value="ENSG00000173588.16"/>
</dbReference>
<dbReference type="Ensembl" id="ENST00000397809.10">
    <molecule id="Q9Y592-1"/>
    <property type="protein sequence ID" value="ENSP00000380911.4"/>
    <property type="gene ID" value="ENSG00000173588.16"/>
</dbReference>
<dbReference type="GeneID" id="51134"/>
<dbReference type="KEGG" id="hsa:51134"/>
<dbReference type="MANE-Select" id="ENST00000397809.10">
    <property type="protein sequence ID" value="ENSP00000380911.4"/>
    <property type="RefSeq nucleotide sequence ID" value="NM_016122.3"/>
    <property type="RefSeq protein sequence ID" value="NP_057206.2"/>
</dbReference>
<dbReference type="UCSC" id="uc058ruu.1">
    <molecule id="Q9Y592-1"/>
    <property type="organism name" value="human"/>
</dbReference>
<dbReference type="AGR" id="HGNC:17966"/>
<dbReference type="CTD" id="51134"/>
<dbReference type="DisGeNET" id="51134"/>
<dbReference type="GeneCards" id="CEP83"/>
<dbReference type="GeneReviews" id="CEP83"/>
<dbReference type="HGNC" id="HGNC:17966">
    <property type="gene designation" value="CEP83"/>
</dbReference>
<dbReference type="HPA" id="ENSG00000173588">
    <property type="expression patterns" value="Low tissue specificity"/>
</dbReference>
<dbReference type="MalaCards" id="CEP83"/>
<dbReference type="MIM" id="615847">
    <property type="type" value="gene"/>
</dbReference>
<dbReference type="MIM" id="615862">
    <property type="type" value="phenotype"/>
</dbReference>
<dbReference type="neXtProt" id="NX_Q9Y592"/>
<dbReference type="OpenTargets" id="ENSG00000173588"/>
<dbReference type="Orphanet" id="93591">
    <property type="disease" value="Infantile nephronophthisis"/>
</dbReference>
<dbReference type="PharmGKB" id="PA142672158"/>
<dbReference type="VEuPathDB" id="HostDB:ENSG00000173588"/>
<dbReference type="eggNOG" id="ENOG502QWE2">
    <property type="taxonomic scope" value="Eukaryota"/>
</dbReference>
<dbReference type="GeneTree" id="ENSGT00940000154003"/>
<dbReference type="InParanoid" id="Q9Y592"/>
<dbReference type="OMA" id="DAYKRKC"/>
<dbReference type="OrthoDB" id="311279at2759"/>
<dbReference type="PAN-GO" id="Q9Y592">
    <property type="GO annotations" value="4 GO annotations based on evolutionary models"/>
</dbReference>
<dbReference type="PhylomeDB" id="Q9Y592"/>
<dbReference type="PathwayCommons" id="Q9Y592"/>
<dbReference type="Reactome" id="R-HSA-5620912">
    <property type="pathway name" value="Anchoring of the basal body to the plasma membrane"/>
</dbReference>
<dbReference type="SignaLink" id="Q9Y592"/>
<dbReference type="BioGRID-ORCS" id="51134">
    <property type="hits" value="12 hits in 1155 CRISPR screens"/>
</dbReference>
<dbReference type="CD-CODE" id="8C2F96ED">
    <property type="entry name" value="Centrosome"/>
</dbReference>
<dbReference type="ChiTaRS" id="CEP83">
    <property type="organism name" value="human"/>
</dbReference>
<dbReference type="GenomeRNAi" id="51134"/>
<dbReference type="Pharos" id="Q9Y592">
    <property type="development level" value="Tdark"/>
</dbReference>
<dbReference type="PRO" id="PR:Q9Y592"/>
<dbReference type="Proteomes" id="UP000005640">
    <property type="component" value="Chromosome 12"/>
</dbReference>
<dbReference type="RNAct" id="Q9Y592">
    <property type="molecule type" value="protein"/>
</dbReference>
<dbReference type="Bgee" id="ENSG00000173588">
    <property type="expression patterns" value="Expressed in right uterine tube and 150 other cell types or tissues"/>
</dbReference>
<dbReference type="ExpressionAtlas" id="Q9Y592">
    <property type="expression patterns" value="baseline and differential"/>
</dbReference>
<dbReference type="GO" id="GO:0005814">
    <property type="term" value="C:centriole"/>
    <property type="evidence" value="ECO:0000314"/>
    <property type="project" value="UniProtKB"/>
</dbReference>
<dbReference type="GO" id="GO:0005813">
    <property type="term" value="C:centrosome"/>
    <property type="evidence" value="ECO:0000318"/>
    <property type="project" value="GO_Central"/>
</dbReference>
<dbReference type="GO" id="GO:0097539">
    <property type="term" value="C:ciliary transition fiber"/>
    <property type="evidence" value="ECO:0000314"/>
    <property type="project" value="MGI"/>
</dbReference>
<dbReference type="GO" id="GO:0005829">
    <property type="term" value="C:cytosol"/>
    <property type="evidence" value="ECO:0000304"/>
    <property type="project" value="Reactome"/>
</dbReference>
<dbReference type="GO" id="GO:0005794">
    <property type="term" value="C:Golgi apparatus"/>
    <property type="evidence" value="ECO:0000314"/>
    <property type="project" value="MGI"/>
</dbReference>
<dbReference type="GO" id="GO:0042802">
    <property type="term" value="F:identical protein binding"/>
    <property type="evidence" value="ECO:0000353"/>
    <property type="project" value="IntAct"/>
</dbReference>
<dbReference type="GO" id="GO:0060271">
    <property type="term" value="P:cilium assembly"/>
    <property type="evidence" value="ECO:0000315"/>
    <property type="project" value="UniProtKB"/>
</dbReference>
<dbReference type="GO" id="GO:0051660">
    <property type="term" value="P:establishment of centrosome localization"/>
    <property type="evidence" value="ECO:0000318"/>
    <property type="project" value="GO_Central"/>
</dbReference>
<dbReference type="GO" id="GO:0071539">
    <property type="term" value="P:protein localization to centrosome"/>
    <property type="evidence" value="ECO:0000315"/>
    <property type="project" value="MGI"/>
</dbReference>
<dbReference type="GO" id="GO:0048278">
    <property type="term" value="P:vesicle docking"/>
    <property type="evidence" value="ECO:0000315"/>
    <property type="project" value="UniProtKB"/>
</dbReference>
<dbReference type="InterPro" id="IPR052116">
    <property type="entry name" value="Centro_Cilium_Assembly"/>
</dbReference>
<dbReference type="PANTHER" id="PTHR23170:SF2">
    <property type="entry name" value="CENTROSOMAL PROTEIN OF 83 KDA"/>
    <property type="match status" value="1"/>
</dbReference>
<dbReference type="PANTHER" id="PTHR23170">
    <property type="entry name" value="NY-REN-58 ANTIGEN"/>
    <property type="match status" value="1"/>
</dbReference>
<reference key="1">
    <citation type="journal article" date="1999" name="Int. J. Cancer">
        <title>Antigens recognized by autologous antibody in patients with renal-cell carcinoma.</title>
        <authorList>
            <person name="Scanlan M.J."/>
            <person name="Gordan J.D."/>
            <person name="Williamson B."/>
            <person name="Stockert E."/>
            <person name="Bander N.H."/>
            <person name="Jongeneel C.V."/>
            <person name="Gure A.O."/>
            <person name="Jaeger D."/>
            <person name="Jaeger E."/>
            <person name="Knuth A."/>
            <person name="Chen Y.-T."/>
            <person name="Old L.J."/>
        </authorList>
    </citation>
    <scope>NUCLEOTIDE SEQUENCE [MRNA] (ISOFORM 1)</scope>
    <scope>IDENTIFICATION AS A RENAL CANCER ANTIGEN</scope>
</reference>
<reference key="2">
    <citation type="journal article" date="2006" name="Nature">
        <title>The finished DNA sequence of human chromosome 12.</title>
        <authorList>
            <person name="Scherer S.E."/>
            <person name="Muzny D.M."/>
            <person name="Buhay C.J."/>
            <person name="Chen R."/>
            <person name="Cree A."/>
            <person name="Ding Y."/>
            <person name="Dugan-Rocha S."/>
            <person name="Gill R."/>
            <person name="Gunaratne P."/>
            <person name="Harris R.A."/>
            <person name="Hawes A.C."/>
            <person name="Hernandez J."/>
            <person name="Hodgson A.V."/>
            <person name="Hume J."/>
            <person name="Jackson A."/>
            <person name="Khan Z.M."/>
            <person name="Kovar-Smith C."/>
            <person name="Lewis L.R."/>
            <person name="Lozado R.J."/>
            <person name="Metzker M.L."/>
            <person name="Milosavljevic A."/>
            <person name="Miner G.R."/>
            <person name="Montgomery K.T."/>
            <person name="Morgan M.B."/>
            <person name="Nazareth L.V."/>
            <person name="Scott G."/>
            <person name="Sodergren E."/>
            <person name="Song X.-Z."/>
            <person name="Steffen D."/>
            <person name="Lovering R.C."/>
            <person name="Wheeler D.A."/>
            <person name="Worley K.C."/>
            <person name="Yuan Y."/>
            <person name="Zhang Z."/>
            <person name="Adams C.Q."/>
            <person name="Ansari-Lari M.A."/>
            <person name="Ayele M."/>
            <person name="Brown M.J."/>
            <person name="Chen G."/>
            <person name="Chen Z."/>
            <person name="Clerc-Blankenburg K.P."/>
            <person name="Davis C."/>
            <person name="Delgado O."/>
            <person name="Dinh H.H."/>
            <person name="Draper H."/>
            <person name="Gonzalez-Garay M.L."/>
            <person name="Havlak P."/>
            <person name="Jackson L.R."/>
            <person name="Jacob L.S."/>
            <person name="Kelly S.H."/>
            <person name="Li L."/>
            <person name="Li Z."/>
            <person name="Liu J."/>
            <person name="Liu W."/>
            <person name="Lu J."/>
            <person name="Maheshwari M."/>
            <person name="Nguyen B.-V."/>
            <person name="Okwuonu G.O."/>
            <person name="Pasternak S."/>
            <person name="Perez L.M."/>
            <person name="Plopper F.J.H."/>
            <person name="Santibanez J."/>
            <person name="Shen H."/>
            <person name="Tabor P.E."/>
            <person name="Verduzco D."/>
            <person name="Waldron L."/>
            <person name="Wang Q."/>
            <person name="Williams G.A."/>
            <person name="Zhang J."/>
            <person name="Zhou J."/>
            <person name="Allen C.C."/>
            <person name="Amin A.G."/>
            <person name="Anyalebechi V."/>
            <person name="Bailey M."/>
            <person name="Barbaria J.A."/>
            <person name="Bimage K.E."/>
            <person name="Bryant N.P."/>
            <person name="Burch P.E."/>
            <person name="Burkett C.E."/>
            <person name="Burrell K.L."/>
            <person name="Calderon E."/>
            <person name="Cardenas V."/>
            <person name="Carter K."/>
            <person name="Casias K."/>
            <person name="Cavazos I."/>
            <person name="Cavazos S.R."/>
            <person name="Ceasar H."/>
            <person name="Chacko J."/>
            <person name="Chan S.N."/>
            <person name="Chavez D."/>
            <person name="Christopoulos C."/>
            <person name="Chu J."/>
            <person name="Cockrell R."/>
            <person name="Cox C.D."/>
            <person name="Dang M."/>
            <person name="Dathorne S.R."/>
            <person name="David R."/>
            <person name="Davis C.M."/>
            <person name="Davy-Carroll L."/>
            <person name="Deshazo D.R."/>
            <person name="Donlin J.E."/>
            <person name="D'Souza L."/>
            <person name="Eaves K.A."/>
            <person name="Egan A."/>
            <person name="Emery-Cohen A.J."/>
            <person name="Escotto M."/>
            <person name="Flagg N."/>
            <person name="Forbes L.D."/>
            <person name="Gabisi A.M."/>
            <person name="Garza M."/>
            <person name="Hamilton C."/>
            <person name="Henderson N."/>
            <person name="Hernandez O."/>
            <person name="Hines S."/>
            <person name="Hogues M.E."/>
            <person name="Huang M."/>
            <person name="Idlebird D.G."/>
            <person name="Johnson R."/>
            <person name="Jolivet A."/>
            <person name="Jones S."/>
            <person name="Kagan R."/>
            <person name="King L.M."/>
            <person name="Leal B."/>
            <person name="Lebow H."/>
            <person name="Lee S."/>
            <person name="LeVan J.M."/>
            <person name="Lewis L.C."/>
            <person name="London P."/>
            <person name="Lorensuhewa L.M."/>
            <person name="Loulseged H."/>
            <person name="Lovett D.A."/>
            <person name="Lucier A."/>
            <person name="Lucier R.L."/>
            <person name="Ma J."/>
            <person name="Madu R.C."/>
            <person name="Mapua P."/>
            <person name="Martindale A.D."/>
            <person name="Martinez E."/>
            <person name="Massey E."/>
            <person name="Mawhiney S."/>
            <person name="Meador M.G."/>
            <person name="Mendez S."/>
            <person name="Mercado C."/>
            <person name="Mercado I.C."/>
            <person name="Merritt C.E."/>
            <person name="Miner Z.L."/>
            <person name="Minja E."/>
            <person name="Mitchell T."/>
            <person name="Mohabbat F."/>
            <person name="Mohabbat K."/>
            <person name="Montgomery B."/>
            <person name="Moore N."/>
            <person name="Morris S."/>
            <person name="Munidasa M."/>
            <person name="Ngo R.N."/>
            <person name="Nguyen N.B."/>
            <person name="Nickerson E."/>
            <person name="Nwaokelemeh O.O."/>
            <person name="Nwokenkwo S."/>
            <person name="Obregon M."/>
            <person name="Oguh M."/>
            <person name="Oragunye N."/>
            <person name="Oviedo R.J."/>
            <person name="Parish B.J."/>
            <person name="Parker D.N."/>
            <person name="Parrish J."/>
            <person name="Parks K.L."/>
            <person name="Paul H.A."/>
            <person name="Payton B.A."/>
            <person name="Perez A."/>
            <person name="Perrin W."/>
            <person name="Pickens A."/>
            <person name="Primus E.L."/>
            <person name="Pu L.-L."/>
            <person name="Puazo M."/>
            <person name="Quiles M.M."/>
            <person name="Quiroz J.B."/>
            <person name="Rabata D."/>
            <person name="Reeves K."/>
            <person name="Ruiz S.J."/>
            <person name="Shao H."/>
            <person name="Sisson I."/>
            <person name="Sonaike T."/>
            <person name="Sorelle R.P."/>
            <person name="Sutton A.E."/>
            <person name="Svatek A.F."/>
            <person name="Svetz L.A."/>
            <person name="Tamerisa K.S."/>
            <person name="Taylor T.R."/>
            <person name="Teague B."/>
            <person name="Thomas N."/>
            <person name="Thorn R.D."/>
            <person name="Trejos Z.Y."/>
            <person name="Trevino B.K."/>
            <person name="Ukegbu O.N."/>
            <person name="Urban J.B."/>
            <person name="Vasquez L.I."/>
            <person name="Vera V.A."/>
            <person name="Villasana D.M."/>
            <person name="Wang L."/>
            <person name="Ward-Moore S."/>
            <person name="Warren J.T."/>
            <person name="Wei X."/>
            <person name="White F."/>
            <person name="Williamson A.L."/>
            <person name="Wleczyk R."/>
            <person name="Wooden H.S."/>
            <person name="Wooden S.H."/>
            <person name="Yen J."/>
            <person name="Yoon L."/>
            <person name="Yoon V."/>
            <person name="Zorrilla S.E."/>
            <person name="Nelson D."/>
            <person name="Kucherlapati R."/>
            <person name="Weinstock G."/>
            <person name="Gibbs R.A."/>
        </authorList>
    </citation>
    <scope>NUCLEOTIDE SEQUENCE [LARGE SCALE GENOMIC DNA]</scope>
</reference>
<reference key="3">
    <citation type="journal article" date="2004" name="Genome Res.">
        <title>The status, quality, and expansion of the NIH full-length cDNA project: the Mammalian Gene Collection (MGC).</title>
        <authorList>
            <consortium name="The MGC Project Team"/>
        </authorList>
    </citation>
    <scope>NUCLEOTIDE SEQUENCE [LARGE SCALE MRNA] (ISOFORM 2)</scope>
    <scope>NUCLEOTIDE SEQUENCE [LARGE SCALE MRNA] OF 1-642 (ISOFORM 1)</scope>
    <source>
        <tissue>Retinoblastoma</tissue>
    </source>
</reference>
<reference key="4">
    <citation type="journal article" date="2004" name="Nat. Genet.">
        <title>Complete sequencing and characterization of 21,243 full-length human cDNAs.</title>
        <authorList>
            <person name="Ota T."/>
            <person name="Suzuki Y."/>
            <person name="Nishikawa T."/>
            <person name="Otsuki T."/>
            <person name="Sugiyama T."/>
            <person name="Irie R."/>
            <person name="Wakamatsu A."/>
            <person name="Hayashi K."/>
            <person name="Sato H."/>
            <person name="Nagai K."/>
            <person name="Kimura K."/>
            <person name="Makita H."/>
            <person name="Sekine M."/>
            <person name="Obayashi M."/>
            <person name="Nishi T."/>
            <person name="Shibahara T."/>
            <person name="Tanaka T."/>
            <person name="Ishii S."/>
            <person name="Yamamoto J."/>
            <person name="Saito K."/>
            <person name="Kawai Y."/>
            <person name="Isono Y."/>
            <person name="Nakamura Y."/>
            <person name="Nagahari K."/>
            <person name="Murakami K."/>
            <person name="Yasuda T."/>
            <person name="Iwayanagi T."/>
            <person name="Wagatsuma M."/>
            <person name="Shiratori A."/>
            <person name="Sudo H."/>
            <person name="Hosoiri T."/>
            <person name="Kaku Y."/>
            <person name="Kodaira H."/>
            <person name="Kondo H."/>
            <person name="Sugawara M."/>
            <person name="Takahashi M."/>
            <person name="Kanda K."/>
            <person name="Yokoi T."/>
            <person name="Furuya T."/>
            <person name="Kikkawa E."/>
            <person name="Omura Y."/>
            <person name="Abe K."/>
            <person name="Kamihara K."/>
            <person name="Katsuta N."/>
            <person name="Sato K."/>
            <person name="Tanikawa M."/>
            <person name="Yamazaki M."/>
            <person name="Ninomiya K."/>
            <person name="Ishibashi T."/>
            <person name="Yamashita H."/>
            <person name="Murakawa K."/>
            <person name="Fujimori K."/>
            <person name="Tanai H."/>
            <person name="Kimata M."/>
            <person name="Watanabe M."/>
            <person name="Hiraoka S."/>
            <person name="Chiba Y."/>
            <person name="Ishida S."/>
            <person name="Ono Y."/>
            <person name="Takiguchi S."/>
            <person name="Watanabe S."/>
            <person name="Yosida M."/>
            <person name="Hotuta T."/>
            <person name="Kusano J."/>
            <person name="Kanehori K."/>
            <person name="Takahashi-Fujii A."/>
            <person name="Hara H."/>
            <person name="Tanase T.-O."/>
            <person name="Nomura Y."/>
            <person name="Togiya S."/>
            <person name="Komai F."/>
            <person name="Hara R."/>
            <person name="Takeuchi K."/>
            <person name="Arita M."/>
            <person name="Imose N."/>
            <person name="Musashino K."/>
            <person name="Yuuki H."/>
            <person name="Oshima A."/>
            <person name="Sasaki N."/>
            <person name="Aotsuka S."/>
            <person name="Yoshikawa Y."/>
            <person name="Matsunawa H."/>
            <person name="Ichihara T."/>
            <person name="Shiohata N."/>
            <person name="Sano S."/>
            <person name="Moriya S."/>
            <person name="Momiyama H."/>
            <person name="Satoh N."/>
            <person name="Takami S."/>
            <person name="Terashima Y."/>
            <person name="Suzuki O."/>
            <person name="Nakagawa S."/>
            <person name="Senoh A."/>
            <person name="Mizoguchi H."/>
            <person name="Goto Y."/>
            <person name="Shimizu F."/>
            <person name="Wakebe H."/>
            <person name="Hishigaki H."/>
            <person name="Watanabe T."/>
            <person name="Sugiyama A."/>
            <person name="Takemoto M."/>
            <person name="Kawakami B."/>
            <person name="Yamazaki M."/>
            <person name="Watanabe K."/>
            <person name="Kumagai A."/>
            <person name="Itakura S."/>
            <person name="Fukuzumi Y."/>
            <person name="Fujimori Y."/>
            <person name="Komiyama M."/>
            <person name="Tashiro H."/>
            <person name="Tanigami A."/>
            <person name="Fujiwara T."/>
            <person name="Ono T."/>
            <person name="Yamada K."/>
            <person name="Fujii Y."/>
            <person name="Ozaki K."/>
            <person name="Hirao M."/>
            <person name="Ohmori Y."/>
            <person name="Kawabata A."/>
            <person name="Hikiji T."/>
            <person name="Kobatake N."/>
            <person name="Inagaki H."/>
            <person name="Ikema Y."/>
            <person name="Okamoto S."/>
            <person name="Okitani R."/>
            <person name="Kawakami T."/>
            <person name="Noguchi S."/>
            <person name="Itoh T."/>
            <person name="Shigeta K."/>
            <person name="Senba T."/>
            <person name="Matsumura K."/>
            <person name="Nakajima Y."/>
            <person name="Mizuno T."/>
            <person name="Morinaga M."/>
            <person name="Sasaki M."/>
            <person name="Togashi T."/>
            <person name="Oyama M."/>
            <person name="Hata H."/>
            <person name="Watanabe M."/>
            <person name="Komatsu T."/>
            <person name="Mizushima-Sugano J."/>
            <person name="Satoh T."/>
            <person name="Shirai Y."/>
            <person name="Takahashi Y."/>
            <person name="Nakagawa K."/>
            <person name="Okumura K."/>
            <person name="Nagase T."/>
            <person name="Nomura N."/>
            <person name="Kikuchi H."/>
            <person name="Masuho Y."/>
            <person name="Yamashita R."/>
            <person name="Nakai K."/>
            <person name="Yada T."/>
            <person name="Nakamura Y."/>
            <person name="Ohara O."/>
            <person name="Isogai T."/>
            <person name="Sugano S."/>
        </authorList>
    </citation>
    <scope>NUCLEOTIDE SEQUENCE [LARGE SCALE MRNA] OF 1-567 (ISOFORM 1)</scope>
</reference>
<reference key="5">
    <citation type="journal article" date="2013" name="Genes Dev.">
        <title>Centriole distal appendages promote membrane docking, leading to cilia initiation.</title>
        <authorList>
            <person name="Tanos B.E."/>
            <person name="Yang H.J."/>
            <person name="Soni R."/>
            <person name="Wang W.J."/>
            <person name="Macaluso F.P."/>
            <person name="Asara J.M."/>
            <person name="Tsou M.F."/>
        </authorList>
    </citation>
    <scope>FUNCTION</scope>
    <scope>SUBCELLULAR LOCATION</scope>
</reference>
<reference key="6">
    <citation type="journal article" date="2013" name="Proc. Natl. Acad. Sci. U.S.A.">
        <title>CCDC41 is required for ciliary vesicle docking to the mother centriole.</title>
        <authorList>
            <person name="Joo K."/>
            <person name="Kim C.G."/>
            <person name="Lee M.S."/>
            <person name="Moon H.Y."/>
            <person name="Lee S.H."/>
            <person name="Kim M.J."/>
            <person name="Kweon H.S."/>
            <person name="Park W.Y."/>
            <person name="Kim C.H."/>
            <person name="Gleeson J.G."/>
            <person name="Kim J."/>
        </authorList>
    </citation>
    <scope>FUNCTION</scope>
    <scope>SUBCELLULAR LOCATION</scope>
    <scope>INTERACTION WITH CEP164 AND IFT20</scope>
</reference>
<reference key="7">
    <citation type="journal article" date="2014" name="Am. J. Hum. Genet.">
        <title>Mutations of CEP83 cause infantile nephronophthisis and intellectual disability.</title>
        <authorList>
            <person name="Failler M."/>
            <person name="Gee H.Y."/>
            <person name="Krug P."/>
            <person name="Joo K."/>
            <person name="Halbritter J."/>
            <person name="Belkacem L."/>
            <person name="Filhol E."/>
            <person name="Porath J.D."/>
            <person name="Braun D.A."/>
            <person name="Schueler M."/>
            <person name="Frigo A."/>
            <person name="Alibeu O."/>
            <person name="Masson C."/>
            <person name="Brochard K."/>
            <person name="Hurault de Ligny B."/>
            <person name="Novo R."/>
            <person name="Pietrement C."/>
            <person name="Kayserili H."/>
            <person name="Salomon R."/>
            <person name="Gubler M.C."/>
            <person name="Otto E.A."/>
            <person name="Antignac C."/>
            <person name="Kim J."/>
            <person name="Benmerah A."/>
            <person name="Hildebrandt F."/>
            <person name="Saunier S."/>
        </authorList>
    </citation>
    <scope>INTERACTION WITH CEP164 AND IFT20</scope>
    <scope>VARIANTS NPHP18 PRO-87; 112-PRO--LEU-117 DEL; PRO-511; GLU-684 DEL AND GLN-692 DEL</scope>
    <scope>CHARACTERIZATION OF VARIANTS NPHP18 PRO-87; 112-PRO--LEU-117 DEL; PRO-511; GLU-684 DEL AND GLN-692 DEL</scope>
</reference>
<protein>
    <recommendedName>
        <fullName>Centrosomal protein of 83 kDa</fullName>
        <shortName>Cep83</shortName>
    </recommendedName>
    <alternativeName>
        <fullName>Coiled-coil domain-containing protein 41</fullName>
    </alternativeName>
    <alternativeName>
        <fullName>Renal carcinoma antigen NY-REN-58</fullName>
    </alternativeName>
</protein>
<organism>
    <name type="scientific">Homo sapiens</name>
    <name type="common">Human</name>
    <dbReference type="NCBI Taxonomy" id="9606"/>
    <lineage>
        <taxon>Eukaryota</taxon>
        <taxon>Metazoa</taxon>
        <taxon>Chordata</taxon>
        <taxon>Craniata</taxon>
        <taxon>Vertebrata</taxon>
        <taxon>Euteleostomi</taxon>
        <taxon>Mammalia</taxon>
        <taxon>Eutheria</taxon>
        <taxon>Euarchontoglires</taxon>
        <taxon>Primates</taxon>
        <taxon>Haplorrhini</taxon>
        <taxon>Catarrhini</taxon>
        <taxon>Hominidae</taxon>
        <taxon>Homo</taxon>
    </lineage>
</organism>
<keyword id="KW-0025">Alternative splicing</keyword>
<keyword id="KW-1186">Ciliopathy</keyword>
<keyword id="KW-0970">Cilium biogenesis/degradation</keyword>
<keyword id="KW-0175">Coiled coil</keyword>
<keyword id="KW-0963">Cytoplasm</keyword>
<keyword id="KW-0206">Cytoskeleton</keyword>
<keyword id="KW-0225">Disease variant</keyword>
<keyword id="KW-0983">Nephronophthisis</keyword>
<keyword id="KW-0597">Phosphoprotein</keyword>
<keyword id="KW-1267">Proteomics identification</keyword>
<keyword id="KW-1185">Reference proteome</keyword>
<gene>
    <name type="primary">CEP83</name>
    <name type="synonym">CCDC41</name>
</gene>
<comment type="function">
    <text evidence="4 5">Component of the distal appendage region of the centriole involved in the initiation of primary cilium assembly. May collaborate with IFT20 in the trafficking of ciliary membrane proteins from the Golgi complex to the cilium during the initiation of primary cilium assembly.</text>
</comment>
<comment type="subunit">
    <text evidence="5 6">Interacts with CEP164 and IFT20.</text>
</comment>
<comment type="interaction">
    <interactant intactId="EBI-11123098">
        <id>Q9Y592-2</id>
    </interactant>
    <interactant intactId="EBI-492498">
        <id>P18848</id>
        <label>ATF4</label>
    </interactant>
    <organismsDiffer>false</organismsDiffer>
    <experiments>3</experiments>
</comment>
<comment type="interaction">
    <interactant intactId="EBI-11123098">
        <id>Q9Y592-2</id>
    </interactant>
    <interactant intactId="EBI-11954144">
        <id>O43439-4</id>
        <label>CBFA2T2</label>
    </interactant>
    <organismsDiffer>false</organismsDiffer>
    <experiments>3</experiments>
</comment>
<comment type="interaction">
    <interactant intactId="EBI-11123098">
        <id>Q9Y592-2</id>
    </interactant>
    <interactant intactId="EBI-11123098">
        <id>Q9Y592-2</id>
        <label>CEP83</label>
    </interactant>
    <organismsDiffer>false</organismsDiffer>
    <experiments>3</experiments>
</comment>
<comment type="interaction">
    <interactant intactId="EBI-11123098">
        <id>Q9Y592-2</id>
    </interactant>
    <interactant intactId="EBI-12823145">
        <id>Q96DZ5</id>
        <label>CLIP3</label>
    </interactant>
    <organismsDiffer>false</organismsDiffer>
    <experiments>3</experiments>
</comment>
<comment type="interaction">
    <interactant intactId="EBI-11123098">
        <id>Q9Y592-2</id>
    </interactant>
    <interactant intactId="EBI-2339219">
        <id>Q08426</id>
        <label>EHHADH</label>
    </interactant>
    <organismsDiffer>false</organismsDiffer>
    <experiments>3</experiments>
</comment>
<comment type="interaction">
    <interactant intactId="EBI-11123098">
        <id>Q9Y592-2</id>
    </interactant>
    <interactant intactId="EBI-1216080">
        <id>Q9Y250</id>
        <label>LZTS1</label>
    </interactant>
    <organismsDiffer>false</organismsDiffer>
    <experiments>3</experiments>
</comment>
<comment type="interaction">
    <interactant intactId="EBI-11123098">
        <id>Q9Y592-2</id>
    </interactant>
    <interactant intactId="EBI-11984663">
        <id>Q06455-2</id>
        <label>RUNX1T1</label>
    </interactant>
    <organismsDiffer>false</organismsDiffer>
    <experiments>3</experiments>
</comment>
<comment type="interaction">
    <interactant intactId="EBI-11123098">
        <id>Q9Y592-2</id>
    </interactant>
    <interactant intactId="EBI-515331">
        <id>P07947</id>
        <label>YES1</label>
    </interactant>
    <organismsDiffer>false</organismsDiffer>
    <experiments>3</experiments>
</comment>
<comment type="subcellular location">
    <subcellularLocation>
        <location evidence="4 5">Cytoplasm</location>
        <location evidence="4 5">Cytoskeleton</location>
        <location evidence="4 5">Microtubule organizing center</location>
        <location evidence="4 5">Centrosome</location>
        <location evidence="4 5">Centriole</location>
    </subcellularLocation>
    <text>Localizes specifically to the distal appendage region of the centriole, which anchors the mother centriole to the plasma membrane. Localizes to centrioles at all stages of the cell cycle, including mitosis.</text>
</comment>
<comment type="alternative products">
    <event type="alternative splicing"/>
    <isoform>
        <id>Q9Y592-1</id>
        <name>1</name>
        <sequence type="displayed"/>
    </isoform>
    <isoform>
        <id>Q9Y592-2</id>
        <name>2</name>
        <sequence type="described" ref="VSP_037760 VSP_037761 VSP_037762"/>
    </isoform>
</comment>
<comment type="disease" evidence="6">
    <disease id="DI-04134">
        <name>Nephronophthisis 18</name>
        <acronym>NPHP18</acronym>
        <description>An autosomal recessive disorder characterized by chronic tubulointerstitial nephritis resulting in end-stage renal disease in early childhood. Extrarenal manifestations, including intellectual disability or liver changes, may occur in some patients.</description>
        <dbReference type="MIM" id="615862"/>
    </disease>
    <text>The disease is caused by variants affecting the gene represented in this entry.</text>
</comment>
<comment type="similarity">
    <text evidence="8">Belongs to the CEP83 family.</text>
</comment>
<comment type="sequence caution" evidence="8">
    <conflict type="frameshift">
        <sequence resource="EMBL-CDS" id="AAD42881"/>
    </conflict>
</comment>
<comment type="sequence caution" evidence="8">
    <conflict type="erroneous initiation">
        <sequence resource="EMBL-CDS" id="AAI25087"/>
    </conflict>
    <text>Truncated N-terminus.</text>
</comment>
<sequence>MVVSTFTDMDTFPNNFPPGGDSGLTGSQSEFQKMLIDERLRCEHHKANYQTLKAEHTRLQNEHVKLQNELKHLFNEKQTQQEKLQLLLEELRGELVEKTKDLEEMKLQILTPQKLELLRAQIQQELETPMRERFRNLDEEVEKYRAVYNKLRYEHTFLKSEFEHQKEEYARILDEGKIKYESEIARLEEDKEELRNQLLNVDLTKDSKRVEQLAREKVYLCQKLKGLEAEVAELKAEKENSEAQVENAQRIQVRQLAEMQATVRSLEAEKQSANLRAERLEKELQSSSEQNTFLINKLHKAEREINTLSSKVKELKHSNKLEITDIKLETARAKSELERERNKIQSELDGLQSDNEILKAAVEHHKVLLVEKDRELIRKVQAAKEEGYQKLVVLQDEKLELENRLADLEKMKVEHDVWRQSEKDQYEEKLRASQMAEEITRKELQSVRLKLQQQIVTIENAEKEKNENSDLKQQISSLQIQVTSLAQSENDLLNSNQMLKEMVERLKQECRNFRSQAEKAQLEAEKTLEEKQIQWLEEKHKLHERITDREEKYNQAKEKLQRAAIAQKKRKSLHENKLKRLQEKVEVLEAKKEELETENQVLNRQNVPFEDYTRLQKRLKDIQRRHNEFRSLILVPNMPPTASINPVSFQSSAMVPSMELPFPPHMQEEQHQRELSLLRKRLEELETTQRKQLEELGSSGE</sequence>
<accession>Q9Y592</accession>
<accession>A4FVB1</accession>
<accession>Q08AP1</accession>
<proteinExistence type="evidence at protein level"/>
<evidence type="ECO:0000250" key="1">
    <source>
        <dbReference type="UniProtKB" id="Q9D5R3"/>
    </source>
</evidence>
<evidence type="ECO:0000255" key="2"/>
<evidence type="ECO:0000256" key="3">
    <source>
        <dbReference type="SAM" id="MobiDB-lite"/>
    </source>
</evidence>
<evidence type="ECO:0000269" key="4">
    <source>
    </source>
</evidence>
<evidence type="ECO:0000269" key="5">
    <source>
    </source>
</evidence>
<evidence type="ECO:0000269" key="6">
    <source>
    </source>
</evidence>
<evidence type="ECO:0000303" key="7">
    <source>
    </source>
</evidence>
<evidence type="ECO:0000305" key="8"/>
<feature type="chain" id="PRO_0000234495" description="Centrosomal protein of 83 kDa">
    <location>
        <begin position="1"/>
        <end position="701"/>
    </location>
</feature>
<feature type="region of interest" description="Disordered" evidence="3">
    <location>
        <begin position="1"/>
        <end position="23"/>
    </location>
</feature>
<feature type="coiled-coil region" evidence="2">
    <location>
        <begin position="40"/>
        <end position="634"/>
    </location>
</feature>
<feature type="coiled-coil region" evidence="2">
    <location>
        <begin position="665"/>
        <end position="698"/>
    </location>
</feature>
<feature type="compositionally biased region" description="Polar residues" evidence="3">
    <location>
        <begin position="1"/>
        <end position="14"/>
    </location>
</feature>
<feature type="modified residue" description="Phosphoserine" evidence="1">
    <location>
        <position position="698"/>
    </location>
</feature>
<feature type="splice variant" id="VSP_037760" description="In isoform 2." evidence="7">
    <location>
        <begin position="1"/>
        <end position="33"/>
    </location>
</feature>
<feature type="splice variant" id="VSP_037761" description="In isoform 2." evidence="7">
    <original>RKSLHENKLKRLQEKVEVLEAKKEELETENQV</original>
    <variation>LEQDLELGCPSVTDTYRESVFPPPPLKRDLLK</variation>
    <location>
        <begin position="570"/>
        <end position="601"/>
    </location>
</feature>
<feature type="splice variant" id="VSP_037762" description="In isoform 2." evidence="7">
    <location>
        <begin position="602"/>
        <end position="693"/>
    </location>
</feature>
<feature type="sequence variant" id="VAR_058397" description="In dbSNP:rs2271979.">
    <original>Q</original>
    <variation>R</variation>
    <location>
        <position position="78"/>
    </location>
</feature>
<feature type="sequence variant" id="VAR_071266" description="In NPHP18; does not affect interaction with CEP164 and IFT20." evidence="6">
    <original>L</original>
    <variation>P</variation>
    <location>
        <position position="87"/>
    </location>
</feature>
<feature type="sequence variant" id="VAR_071267" description="In NPHP18; does not affect interaction with CEP164 and IFT20." evidence="6">
    <location>
        <begin position="112"/>
        <end position="117"/>
    </location>
</feature>
<feature type="sequence variant" id="VAR_071268" description="In NPHP18; does not interact with CEP164 and IFT20; dbSNP:rs587777487." evidence="6">
    <original>R</original>
    <variation>P</variation>
    <location>
        <position position="511"/>
    </location>
</feature>
<feature type="sequence variant" id="VAR_071269" description="In NPHP18; accumulates in the nucleus." evidence="6">
    <location>
        <position position="684"/>
    </location>
</feature>
<feature type="sequence variant" id="VAR_071270" description="In NPHP18; accumulates in the nucleus; does not interact with CEP164 and IFT20." evidence="6">
    <location>
        <position position="692"/>
    </location>
</feature>
<feature type="sequence conflict" description="In Ref. 1; AAD42881." evidence="8" ref="1">
    <original>E</original>
    <variation>G</variation>
    <location>
        <position position="267"/>
    </location>
</feature>
<feature type="sequence conflict" description="In Ref. 1; AAD42881." evidence="8" ref="1">
    <original>I</original>
    <variation>L</variation>
    <location>
        <position position="344"/>
    </location>
</feature>
<feature type="sequence conflict" description="In Ref. 1; AAD42881." evidence="8" ref="1">
    <original>E</original>
    <variation>D</variation>
    <location>
        <position position="544"/>
    </location>
</feature>
<feature type="sequence conflict" description="In Ref. 3; AAI25087." evidence="8" ref="3">
    <original>R</original>
    <variation>C</variation>
    <location>
        <position position="545"/>
    </location>
</feature>